<keyword id="KW-0251">Elongation factor</keyword>
<keyword id="KW-0648">Protein biosynthesis</keyword>
<dbReference type="EMBL" id="X96517">
    <property type="protein sequence ID" value="CAA65366.1"/>
    <property type="molecule type" value="Genomic_DNA"/>
</dbReference>
<dbReference type="EMBL" id="CH672349">
    <property type="protein sequence ID" value="EEQ45053.1"/>
    <property type="molecule type" value="Genomic_DNA"/>
</dbReference>
<dbReference type="SMR" id="P78590"/>
<dbReference type="PaxDb" id="5476-P78590"/>
<dbReference type="VEuPathDB" id="FungiDB:CAWG_03362"/>
<dbReference type="HOGENOM" id="CLU_050172_0_2_1"/>
<dbReference type="OMA" id="YRWYKHI"/>
<dbReference type="OrthoDB" id="18515at766764"/>
<dbReference type="Proteomes" id="UP000001429">
    <property type="component" value="Chromosome 4, Supercontig 1.4"/>
</dbReference>
<dbReference type="GO" id="GO:0005829">
    <property type="term" value="C:cytosol"/>
    <property type="evidence" value="ECO:0007669"/>
    <property type="project" value="TreeGrafter"/>
</dbReference>
<dbReference type="GO" id="GO:0005853">
    <property type="term" value="C:eukaryotic translation elongation factor 1 complex"/>
    <property type="evidence" value="ECO:0007669"/>
    <property type="project" value="InterPro"/>
</dbReference>
<dbReference type="GO" id="GO:0005085">
    <property type="term" value="F:guanyl-nucleotide exchange factor activity"/>
    <property type="evidence" value="ECO:0007669"/>
    <property type="project" value="TreeGrafter"/>
</dbReference>
<dbReference type="GO" id="GO:0003746">
    <property type="term" value="F:translation elongation factor activity"/>
    <property type="evidence" value="ECO:0007669"/>
    <property type="project" value="UniProtKB-KW"/>
</dbReference>
<dbReference type="CDD" id="cd00292">
    <property type="entry name" value="EF1B"/>
    <property type="match status" value="1"/>
</dbReference>
<dbReference type="FunFam" id="3.30.70.60:FF:000001">
    <property type="entry name" value="Elongation factor 1-beta 1 like"/>
    <property type="match status" value="1"/>
</dbReference>
<dbReference type="Gene3D" id="1.20.1050.130">
    <property type="match status" value="1"/>
</dbReference>
<dbReference type="Gene3D" id="3.30.70.60">
    <property type="match status" value="1"/>
</dbReference>
<dbReference type="InterPro" id="IPR053836">
    <property type="entry name" value="Arc1-like_N"/>
</dbReference>
<dbReference type="InterPro" id="IPR036219">
    <property type="entry name" value="eEF-1beta-like_sf"/>
</dbReference>
<dbReference type="InterPro" id="IPR018940">
    <property type="entry name" value="EF-1_beta_acid_region_euk"/>
</dbReference>
<dbReference type="InterPro" id="IPR049720">
    <property type="entry name" value="EF1B_bsu/dsu"/>
</dbReference>
<dbReference type="InterPro" id="IPR014038">
    <property type="entry name" value="EF1B_bsu/dsu_GNE"/>
</dbReference>
<dbReference type="InterPro" id="IPR036282">
    <property type="entry name" value="Glutathione-S-Trfase_C_sf"/>
</dbReference>
<dbReference type="InterPro" id="IPR014717">
    <property type="entry name" value="Transl_elong_EF1B/ribsomal_bS6"/>
</dbReference>
<dbReference type="InterPro" id="IPR001326">
    <property type="entry name" value="Transl_elong_EF1B_B/D_CS"/>
</dbReference>
<dbReference type="PANTHER" id="PTHR11595">
    <property type="entry name" value="EF-HAND AND COILED-COIL DOMAIN-CONTAINING FAMILY MEMBER"/>
    <property type="match status" value="1"/>
</dbReference>
<dbReference type="PANTHER" id="PTHR11595:SF21">
    <property type="entry name" value="ELONGATION FACTOR 1-BETA"/>
    <property type="match status" value="1"/>
</dbReference>
<dbReference type="Pfam" id="PF21972">
    <property type="entry name" value="Arc1p_N_like"/>
    <property type="match status" value="1"/>
</dbReference>
<dbReference type="Pfam" id="PF10587">
    <property type="entry name" value="EF-1_beta_acid"/>
    <property type="match status" value="1"/>
</dbReference>
<dbReference type="Pfam" id="PF00736">
    <property type="entry name" value="EF1_GNE"/>
    <property type="match status" value="1"/>
</dbReference>
<dbReference type="SMART" id="SM01182">
    <property type="entry name" value="EF-1_beta_acid"/>
    <property type="match status" value="1"/>
</dbReference>
<dbReference type="SMART" id="SM00888">
    <property type="entry name" value="EF1_GNE"/>
    <property type="match status" value="1"/>
</dbReference>
<dbReference type="SUPFAM" id="SSF54984">
    <property type="entry name" value="eEF-1beta-like"/>
    <property type="match status" value="1"/>
</dbReference>
<dbReference type="SUPFAM" id="SSF47616">
    <property type="entry name" value="GST C-terminal domain-like"/>
    <property type="match status" value="1"/>
</dbReference>
<dbReference type="PROSITE" id="PS00824">
    <property type="entry name" value="EF1BD_1"/>
    <property type="match status" value="1"/>
</dbReference>
<dbReference type="PROSITE" id="PS00825">
    <property type="entry name" value="EF1BD_2"/>
    <property type="match status" value="1"/>
</dbReference>
<organism>
    <name type="scientific">Candida albicans (strain WO-1)</name>
    <name type="common">Yeast</name>
    <dbReference type="NCBI Taxonomy" id="294748"/>
    <lineage>
        <taxon>Eukaryota</taxon>
        <taxon>Fungi</taxon>
        <taxon>Dikarya</taxon>
        <taxon>Ascomycota</taxon>
        <taxon>Saccharomycotina</taxon>
        <taxon>Pichiomycetes</taxon>
        <taxon>Debaryomycetaceae</taxon>
        <taxon>Candida/Lodderomyces clade</taxon>
        <taxon>Candida</taxon>
    </lineage>
</organism>
<sequence>MSFSDFSKVESIKSLNEFLADKSYIDGTTATQADVTVYKAFQKEFPQFTRWFNHIASFTEEFEDLPAGKAPAASGSAAAAAEEEDDEDVDLFGSDDEVDEEAEKLKQQRLAEYAAKKAAKGPKPAAKSIVTLDVKPWDDETDLDELLTNVKAIEMEGLTWGAHQWIPVGFGIKKLQINLVVEDALVSLDDLQAAVEEDEDHVQSTDIAAMQKL</sequence>
<gene>
    <name type="primary">EFB1</name>
    <name type="ORF">CAWG_03362</name>
</gene>
<reference key="1">
    <citation type="journal article" date="1996" name="FEMS Microbiol. Lett.">
        <title>Molecular cloning and characterization of a Candida albicans gene (EFB1) coding for the elongation factor EF-1 beta.</title>
        <authorList>
            <person name="Maneu Flores V."/>
            <person name="Cervera A.M."/>
            <person name="Martinez J.P."/>
            <person name="Gozalbo D."/>
        </authorList>
    </citation>
    <scope>NUCLEOTIDE SEQUENCE [GENOMIC DNA]</scope>
    <source>
        <strain>WO-1</strain>
    </source>
</reference>
<reference key="2">
    <citation type="journal article" date="2009" name="Nature">
        <title>Evolution of pathogenicity and sexual reproduction in eight Candida genomes.</title>
        <authorList>
            <person name="Butler G."/>
            <person name="Rasmussen M.D."/>
            <person name="Lin M.F."/>
            <person name="Santos M.A.S."/>
            <person name="Sakthikumar S."/>
            <person name="Munro C.A."/>
            <person name="Rheinbay E."/>
            <person name="Grabherr M."/>
            <person name="Forche A."/>
            <person name="Reedy J.L."/>
            <person name="Agrafioti I."/>
            <person name="Arnaud M.B."/>
            <person name="Bates S."/>
            <person name="Brown A.J.P."/>
            <person name="Brunke S."/>
            <person name="Costanzo M.C."/>
            <person name="Fitzpatrick D.A."/>
            <person name="de Groot P.W.J."/>
            <person name="Harris D."/>
            <person name="Hoyer L.L."/>
            <person name="Hube B."/>
            <person name="Klis F.M."/>
            <person name="Kodira C."/>
            <person name="Lennard N."/>
            <person name="Logue M.E."/>
            <person name="Martin R."/>
            <person name="Neiman A.M."/>
            <person name="Nikolaou E."/>
            <person name="Quail M.A."/>
            <person name="Quinn J."/>
            <person name="Santos M.C."/>
            <person name="Schmitzberger F.F."/>
            <person name="Sherlock G."/>
            <person name="Shah P."/>
            <person name="Silverstein K.A.T."/>
            <person name="Skrzypek M.S."/>
            <person name="Soll D."/>
            <person name="Staggs R."/>
            <person name="Stansfield I."/>
            <person name="Stumpf M.P.H."/>
            <person name="Sudbery P.E."/>
            <person name="Srikantha T."/>
            <person name="Zeng Q."/>
            <person name="Berman J."/>
            <person name="Berriman M."/>
            <person name="Heitman J."/>
            <person name="Gow N.A.R."/>
            <person name="Lorenz M.C."/>
            <person name="Birren B.W."/>
            <person name="Kellis M."/>
            <person name="Cuomo C.A."/>
        </authorList>
    </citation>
    <scope>NUCLEOTIDE SEQUENCE [LARGE SCALE GENOMIC DNA]</scope>
    <source>
        <strain>WO-1</strain>
    </source>
</reference>
<feature type="chain" id="PRO_0000155040" description="Elongation factor 1-beta">
    <location>
        <begin position="1"/>
        <end position="213"/>
    </location>
</feature>
<feature type="region of interest" description="Disordered" evidence="1">
    <location>
        <begin position="67"/>
        <end position="88"/>
    </location>
</feature>
<feature type="compositionally biased region" description="Low complexity" evidence="1">
    <location>
        <begin position="67"/>
        <end position="80"/>
    </location>
</feature>
<proteinExistence type="inferred from homology"/>
<name>EF1B_CANAW</name>
<comment type="function">
    <text>EF-1-beta and EF-1-delta stimulate the exchange of GDP bound to EF-1-alpha to GTP.</text>
</comment>
<comment type="subunit">
    <text>EF-1 is composed of 4 subunits: alpha, beta, delta, and gamma.</text>
</comment>
<comment type="similarity">
    <text evidence="2">Belongs to the EF-1-beta/EF-1-delta family.</text>
</comment>
<accession>P78590</accession>
<accession>C4YH21</accession>
<protein>
    <recommendedName>
        <fullName>Elongation factor 1-beta</fullName>
        <shortName>EF-1-beta</shortName>
    </recommendedName>
</protein>
<evidence type="ECO:0000256" key="1">
    <source>
        <dbReference type="SAM" id="MobiDB-lite"/>
    </source>
</evidence>
<evidence type="ECO:0000305" key="2"/>